<protein>
    <recommendedName>
        <fullName evidence="1">N-succinylarginine dihydrolase</fullName>
        <ecNumber evidence="1">3.5.3.23</ecNumber>
    </recommendedName>
</protein>
<evidence type="ECO:0000255" key="1">
    <source>
        <dbReference type="HAMAP-Rule" id="MF_01172"/>
    </source>
</evidence>
<name>ASTB_PHOLL</name>
<comment type="function">
    <text evidence="1">Catalyzes the hydrolysis of N(2)-succinylarginine into N(2)-succinylornithine, ammonia and CO(2).</text>
</comment>
<comment type="catalytic activity">
    <reaction evidence="1">
        <text>N(2)-succinyl-L-arginine + 2 H2O + 2 H(+) = N(2)-succinyl-L-ornithine + 2 NH4(+) + CO2</text>
        <dbReference type="Rhea" id="RHEA:19533"/>
        <dbReference type="ChEBI" id="CHEBI:15377"/>
        <dbReference type="ChEBI" id="CHEBI:15378"/>
        <dbReference type="ChEBI" id="CHEBI:16526"/>
        <dbReference type="ChEBI" id="CHEBI:28938"/>
        <dbReference type="ChEBI" id="CHEBI:58241"/>
        <dbReference type="ChEBI" id="CHEBI:58514"/>
        <dbReference type="EC" id="3.5.3.23"/>
    </reaction>
</comment>
<comment type="pathway">
    <text evidence="1">Amino-acid degradation; L-arginine degradation via AST pathway; L-glutamate and succinate from L-arginine: step 2/5.</text>
</comment>
<comment type="subunit">
    <text evidence="1">Homodimer.</text>
</comment>
<comment type="similarity">
    <text evidence="1">Belongs to the succinylarginine dihydrolase family.</text>
</comment>
<gene>
    <name evidence="1" type="primary">astB</name>
    <name type="ordered locus">plu3107</name>
</gene>
<feature type="chain" id="PRO_0000262362" description="N-succinylarginine dihydrolase">
    <location>
        <begin position="1"/>
        <end position="447"/>
    </location>
</feature>
<feature type="active site" evidence="1">
    <location>
        <position position="174"/>
    </location>
</feature>
<feature type="active site" evidence="1">
    <location>
        <position position="249"/>
    </location>
</feature>
<feature type="active site" description="Nucleophile" evidence="1">
    <location>
        <position position="371"/>
    </location>
</feature>
<feature type="binding site" evidence="1">
    <location>
        <begin position="19"/>
        <end position="28"/>
    </location>
    <ligand>
        <name>substrate</name>
    </ligand>
</feature>
<feature type="binding site" evidence="1">
    <location>
        <position position="110"/>
    </location>
    <ligand>
        <name>substrate</name>
    </ligand>
</feature>
<feature type="binding site" evidence="1">
    <location>
        <begin position="137"/>
        <end position="138"/>
    </location>
    <ligand>
        <name>substrate</name>
    </ligand>
</feature>
<feature type="binding site" evidence="1">
    <location>
        <position position="213"/>
    </location>
    <ligand>
        <name>substrate</name>
    </ligand>
</feature>
<feature type="binding site" evidence="1">
    <location>
        <position position="251"/>
    </location>
    <ligand>
        <name>substrate</name>
    </ligand>
</feature>
<feature type="binding site" evidence="1">
    <location>
        <position position="365"/>
    </location>
    <ligand>
        <name>substrate</name>
    </ligand>
</feature>
<accession>Q7N2H0</accession>
<sequence>MAGFEANFDGLVGMTHHYAGLSVGNKASINNKDSVSNPRKAALQGLMKMKALADEGFIQGVLPPQQRPHIPALRNLGFVGSDEQILHKAAKYSPVLLSKLSSASSMWTANAATVSPSADSADQRVHFTVANLNNKLHRSLEIATTTAALKATFADQNYFVHHQALPQHEDFGDEGAANHNRLGGDYDSPGVQVFVYGRSVFRGGPVPKRYPARQTLEASEAIARLHRLNPAQTVFVQQNPVAIDSGVFHNDVIAVSNRNVLFHHQYAYLNQSQVLTEIRQKMAVLGQNFVSIEVPAEQISIKDAVDSYLFNSQLLSKIDGKMVLVVPEECRQHSAVWDYLQSLSAQTSAPINEVRVFDLRESMRNGGGPACLRLRVVLNDAEFRAVNPATLMNTQLYQRLTKWIEHHYRDELCASDLADPQLLCEVYTALDELTQILNLGSIYEFQR</sequence>
<organism>
    <name type="scientific">Photorhabdus laumondii subsp. laumondii (strain DSM 15139 / CIP 105565 / TT01)</name>
    <name type="common">Photorhabdus luminescens subsp. laumondii</name>
    <dbReference type="NCBI Taxonomy" id="243265"/>
    <lineage>
        <taxon>Bacteria</taxon>
        <taxon>Pseudomonadati</taxon>
        <taxon>Pseudomonadota</taxon>
        <taxon>Gammaproteobacteria</taxon>
        <taxon>Enterobacterales</taxon>
        <taxon>Morganellaceae</taxon>
        <taxon>Photorhabdus</taxon>
    </lineage>
</organism>
<keyword id="KW-0056">Arginine metabolism</keyword>
<keyword id="KW-0378">Hydrolase</keyword>
<keyword id="KW-1185">Reference proteome</keyword>
<dbReference type="EC" id="3.5.3.23" evidence="1"/>
<dbReference type="EMBL" id="BX571869">
    <property type="protein sequence ID" value="CAE15481.1"/>
    <property type="molecule type" value="Genomic_DNA"/>
</dbReference>
<dbReference type="RefSeq" id="WP_011147323.1">
    <property type="nucleotide sequence ID" value="NC_005126.1"/>
</dbReference>
<dbReference type="SMR" id="Q7N2H0"/>
<dbReference type="STRING" id="243265.plu3107"/>
<dbReference type="GeneID" id="48849369"/>
<dbReference type="KEGG" id="plu:plu3107"/>
<dbReference type="eggNOG" id="COG3724">
    <property type="taxonomic scope" value="Bacteria"/>
</dbReference>
<dbReference type="HOGENOM" id="CLU_053835_0_0_6"/>
<dbReference type="OrthoDB" id="248552at2"/>
<dbReference type="UniPathway" id="UPA00185">
    <property type="reaction ID" value="UER00280"/>
</dbReference>
<dbReference type="Proteomes" id="UP000002514">
    <property type="component" value="Chromosome"/>
</dbReference>
<dbReference type="GO" id="GO:0009015">
    <property type="term" value="F:N-succinylarginine dihydrolase activity"/>
    <property type="evidence" value="ECO:0007669"/>
    <property type="project" value="UniProtKB-UniRule"/>
</dbReference>
<dbReference type="GO" id="GO:0019544">
    <property type="term" value="P:arginine catabolic process to glutamate"/>
    <property type="evidence" value="ECO:0007669"/>
    <property type="project" value="UniProtKB-UniRule"/>
</dbReference>
<dbReference type="GO" id="GO:0019545">
    <property type="term" value="P:arginine catabolic process to succinate"/>
    <property type="evidence" value="ECO:0007669"/>
    <property type="project" value="UniProtKB-UniRule"/>
</dbReference>
<dbReference type="Gene3D" id="3.75.10.20">
    <property type="entry name" value="Succinylarginine dihydrolase"/>
    <property type="match status" value="1"/>
</dbReference>
<dbReference type="HAMAP" id="MF_01172">
    <property type="entry name" value="AstB"/>
    <property type="match status" value="1"/>
</dbReference>
<dbReference type="InterPro" id="IPR037031">
    <property type="entry name" value="AstB_sf"/>
</dbReference>
<dbReference type="InterPro" id="IPR007079">
    <property type="entry name" value="SuccinylArg_d-Hdrlase_AstB"/>
</dbReference>
<dbReference type="NCBIfam" id="TIGR03241">
    <property type="entry name" value="arg_catab_astB"/>
    <property type="match status" value="1"/>
</dbReference>
<dbReference type="NCBIfam" id="NF009789">
    <property type="entry name" value="PRK13281.1"/>
    <property type="match status" value="1"/>
</dbReference>
<dbReference type="PANTHER" id="PTHR30420">
    <property type="entry name" value="N-SUCCINYLARGININE DIHYDROLASE"/>
    <property type="match status" value="1"/>
</dbReference>
<dbReference type="PANTHER" id="PTHR30420:SF2">
    <property type="entry name" value="N-SUCCINYLARGININE DIHYDROLASE"/>
    <property type="match status" value="1"/>
</dbReference>
<dbReference type="Pfam" id="PF04996">
    <property type="entry name" value="AstB"/>
    <property type="match status" value="1"/>
</dbReference>
<dbReference type="SUPFAM" id="SSF55909">
    <property type="entry name" value="Pentein"/>
    <property type="match status" value="1"/>
</dbReference>
<reference key="1">
    <citation type="journal article" date="2003" name="Nat. Biotechnol.">
        <title>The genome sequence of the entomopathogenic bacterium Photorhabdus luminescens.</title>
        <authorList>
            <person name="Duchaud E."/>
            <person name="Rusniok C."/>
            <person name="Frangeul L."/>
            <person name="Buchrieser C."/>
            <person name="Givaudan A."/>
            <person name="Taourit S."/>
            <person name="Bocs S."/>
            <person name="Boursaux-Eude C."/>
            <person name="Chandler M."/>
            <person name="Charles J.-F."/>
            <person name="Dassa E."/>
            <person name="Derose R."/>
            <person name="Derzelle S."/>
            <person name="Freyssinet G."/>
            <person name="Gaudriault S."/>
            <person name="Medigue C."/>
            <person name="Lanois A."/>
            <person name="Powell K."/>
            <person name="Siguier P."/>
            <person name="Vincent R."/>
            <person name="Wingate V."/>
            <person name="Zouine M."/>
            <person name="Glaser P."/>
            <person name="Boemare N."/>
            <person name="Danchin A."/>
            <person name="Kunst F."/>
        </authorList>
    </citation>
    <scope>NUCLEOTIDE SEQUENCE [LARGE SCALE GENOMIC DNA]</scope>
    <source>
        <strain>DSM 15139 / CIP 105565 / TT01</strain>
    </source>
</reference>
<proteinExistence type="inferred from homology"/>